<proteinExistence type="inferred from homology"/>
<sequence length="336" mass="37091">MLPLTYVVKAFSIGLFFSLFLMKPLISWLKKQGFQDHIHKDHCEKLEELHKDKAYIPTAGGIVFVFASVLAVLLLFPIQLWSTWFCIGTILLWGALGWCDDQIKNRRRVGHGLSAKHKFLIQNCLAAGVVLPIMFAYKESFLSFHLPFLGIVSLPHHWWSYLLSFAIATLAIVGTSNSVNLTDGLDGLAAGAMVIACLGMLVVACTNGAPWAFICCVLLATLAGSCLGFLRYNKSPARVFMGDTGSLFLGAMLGMCAVLLRAEFLLLFMGGIFVLESLSVIVQVGSYKLRKKRVFLCAPLHHHYEYKGLSEKAVVRNFLIVELICVVVGIIAVFVD</sequence>
<protein>
    <recommendedName>
        <fullName evidence="1">Phospho-N-acetylmuramoyl-pentapeptide-transferase</fullName>
        <ecNumber evidence="1">2.7.8.13</ecNumber>
    </recommendedName>
    <alternativeName>
        <fullName evidence="1">UDP-MurNAc-pentapeptide phosphotransferase</fullName>
    </alternativeName>
</protein>
<feature type="chain" id="PRO_1000090609" description="Phospho-N-acetylmuramoyl-pentapeptide-transferase">
    <location>
        <begin position="1"/>
        <end position="336"/>
    </location>
</feature>
<feature type="transmembrane region" description="Helical" evidence="1">
    <location>
        <begin position="1"/>
        <end position="21"/>
    </location>
</feature>
<feature type="transmembrane region" description="Helical" evidence="1">
    <location>
        <begin position="56"/>
        <end position="76"/>
    </location>
</feature>
<feature type="transmembrane region" description="Helical" evidence="1">
    <location>
        <begin position="78"/>
        <end position="98"/>
    </location>
</feature>
<feature type="transmembrane region" description="Helical" evidence="1">
    <location>
        <begin position="124"/>
        <end position="144"/>
    </location>
</feature>
<feature type="transmembrane region" description="Helical" evidence="1">
    <location>
        <begin position="148"/>
        <end position="168"/>
    </location>
</feature>
<feature type="transmembrane region" description="Helical" evidence="1">
    <location>
        <begin position="184"/>
        <end position="204"/>
    </location>
</feature>
<feature type="transmembrane region" description="Helical" evidence="1">
    <location>
        <begin position="210"/>
        <end position="230"/>
    </location>
</feature>
<feature type="transmembrane region" description="Helical" evidence="1">
    <location>
        <begin position="239"/>
        <end position="259"/>
    </location>
</feature>
<feature type="transmembrane region" description="Helical" evidence="1">
    <location>
        <begin position="264"/>
        <end position="284"/>
    </location>
</feature>
<feature type="transmembrane region" description="Helical" evidence="1">
    <location>
        <begin position="314"/>
        <end position="334"/>
    </location>
</feature>
<dbReference type="EC" id="2.7.8.13" evidence="1"/>
<dbReference type="EMBL" id="AM884176">
    <property type="protein sequence ID" value="CAP03570.1"/>
    <property type="molecule type" value="Genomic_DNA"/>
</dbReference>
<dbReference type="RefSeq" id="WP_009872137.1">
    <property type="nucleotide sequence ID" value="NC_010287.1"/>
</dbReference>
<dbReference type="RefSeq" id="YP_001654217.1">
    <property type="nucleotide sequence ID" value="NC_010287.1"/>
</dbReference>
<dbReference type="SMR" id="B0B8Y3"/>
<dbReference type="KEGG" id="ctb:CTL0126"/>
<dbReference type="PATRIC" id="fig|471472.4.peg.137"/>
<dbReference type="HOGENOM" id="CLU_023982_0_1_0"/>
<dbReference type="UniPathway" id="UPA00219"/>
<dbReference type="Proteomes" id="UP001154402">
    <property type="component" value="Chromosome"/>
</dbReference>
<dbReference type="GO" id="GO:0005886">
    <property type="term" value="C:plasma membrane"/>
    <property type="evidence" value="ECO:0007669"/>
    <property type="project" value="UniProtKB-SubCell"/>
</dbReference>
<dbReference type="GO" id="GO:0046872">
    <property type="term" value="F:metal ion binding"/>
    <property type="evidence" value="ECO:0007669"/>
    <property type="project" value="UniProtKB-KW"/>
</dbReference>
<dbReference type="GO" id="GO:0008963">
    <property type="term" value="F:phospho-N-acetylmuramoyl-pentapeptide-transferase activity"/>
    <property type="evidence" value="ECO:0007669"/>
    <property type="project" value="UniProtKB-UniRule"/>
</dbReference>
<dbReference type="GO" id="GO:0051992">
    <property type="term" value="F:UDP-N-acetylmuramoyl-L-alanyl-D-glutamyl-meso-2,6-diaminopimelyl-D-alanyl-D-alanine:undecaprenyl-phosphate transferase activity"/>
    <property type="evidence" value="ECO:0007669"/>
    <property type="project" value="RHEA"/>
</dbReference>
<dbReference type="GO" id="GO:0051301">
    <property type="term" value="P:cell division"/>
    <property type="evidence" value="ECO:0007669"/>
    <property type="project" value="UniProtKB-KW"/>
</dbReference>
<dbReference type="GO" id="GO:0071555">
    <property type="term" value="P:cell wall organization"/>
    <property type="evidence" value="ECO:0007669"/>
    <property type="project" value="UniProtKB-KW"/>
</dbReference>
<dbReference type="GO" id="GO:0009252">
    <property type="term" value="P:peptidoglycan biosynthetic process"/>
    <property type="evidence" value="ECO:0007669"/>
    <property type="project" value="UniProtKB-UniRule"/>
</dbReference>
<dbReference type="GO" id="GO:0008360">
    <property type="term" value="P:regulation of cell shape"/>
    <property type="evidence" value="ECO:0007669"/>
    <property type="project" value="UniProtKB-KW"/>
</dbReference>
<dbReference type="CDD" id="cd06852">
    <property type="entry name" value="GT_MraY"/>
    <property type="match status" value="1"/>
</dbReference>
<dbReference type="HAMAP" id="MF_00038">
    <property type="entry name" value="MraY"/>
    <property type="match status" value="1"/>
</dbReference>
<dbReference type="InterPro" id="IPR000715">
    <property type="entry name" value="Glycosyl_transferase_4"/>
</dbReference>
<dbReference type="InterPro" id="IPR003524">
    <property type="entry name" value="PNAcMuramoyl-5peptid_Trfase"/>
</dbReference>
<dbReference type="InterPro" id="IPR018480">
    <property type="entry name" value="PNAcMuramoyl-5peptid_Trfase_CS"/>
</dbReference>
<dbReference type="NCBIfam" id="TIGR00445">
    <property type="entry name" value="mraY"/>
    <property type="match status" value="1"/>
</dbReference>
<dbReference type="PANTHER" id="PTHR22926">
    <property type="entry name" value="PHOSPHO-N-ACETYLMURAMOYL-PENTAPEPTIDE-TRANSFERASE"/>
    <property type="match status" value="1"/>
</dbReference>
<dbReference type="PANTHER" id="PTHR22926:SF5">
    <property type="entry name" value="PHOSPHO-N-ACETYLMURAMOYL-PENTAPEPTIDE-TRANSFERASE HOMOLOG"/>
    <property type="match status" value="1"/>
</dbReference>
<dbReference type="Pfam" id="PF00953">
    <property type="entry name" value="Glycos_transf_4"/>
    <property type="match status" value="1"/>
</dbReference>
<dbReference type="PROSITE" id="PS01347">
    <property type="entry name" value="MRAY_1"/>
    <property type="match status" value="1"/>
</dbReference>
<dbReference type="PROSITE" id="PS01348">
    <property type="entry name" value="MRAY_2"/>
    <property type="match status" value="1"/>
</dbReference>
<name>MRAY_CHLT2</name>
<reference key="1">
    <citation type="journal article" date="2008" name="Genome Res.">
        <title>Chlamydia trachomatis: genome sequence analysis of lymphogranuloma venereum isolates.</title>
        <authorList>
            <person name="Thomson N.R."/>
            <person name="Holden M.T.G."/>
            <person name="Carder C."/>
            <person name="Lennard N."/>
            <person name="Lockey S.J."/>
            <person name="Marsh P."/>
            <person name="Skipp P."/>
            <person name="O'Connor C.D."/>
            <person name="Goodhead I."/>
            <person name="Norbertzcak H."/>
            <person name="Harris B."/>
            <person name="Ormond D."/>
            <person name="Rance R."/>
            <person name="Quail M.A."/>
            <person name="Parkhill J."/>
            <person name="Stephens R.S."/>
            <person name="Clarke I.N."/>
        </authorList>
    </citation>
    <scope>NUCLEOTIDE SEQUENCE [LARGE SCALE GENOMIC DNA]</scope>
    <source>
        <strain>ATCC VR-902B / DSM 19102 / 434/Bu</strain>
    </source>
</reference>
<comment type="function">
    <text evidence="1">Catalyzes the initial step of the lipid cycle reactions in the biosynthesis of the cell wall peptidoglycan: transfers peptidoglycan precursor phospho-MurNAc-pentapeptide from UDP-MurNAc-pentapeptide onto the lipid carrier undecaprenyl phosphate, yielding undecaprenyl-pyrophosphoryl-MurNAc-pentapeptide, known as lipid I.</text>
</comment>
<comment type="catalytic activity">
    <reaction evidence="1">
        <text>UDP-N-acetyl-alpha-D-muramoyl-L-alanyl-gamma-D-glutamyl-meso-2,6-diaminopimeloyl-D-alanyl-D-alanine + di-trans,octa-cis-undecaprenyl phosphate = di-trans,octa-cis-undecaprenyl diphospho-N-acetyl-alpha-D-muramoyl-L-alanyl-D-glutamyl-meso-2,6-diaminopimeloyl-D-alanyl-D-alanine + UMP</text>
        <dbReference type="Rhea" id="RHEA:28386"/>
        <dbReference type="ChEBI" id="CHEBI:57865"/>
        <dbReference type="ChEBI" id="CHEBI:60392"/>
        <dbReference type="ChEBI" id="CHEBI:61386"/>
        <dbReference type="ChEBI" id="CHEBI:61387"/>
        <dbReference type="EC" id="2.7.8.13"/>
    </reaction>
</comment>
<comment type="cofactor">
    <cofactor evidence="1">
        <name>Mg(2+)</name>
        <dbReference type="ChEBI" id="CHEBI:18420"/>
    </cofactor>
</comment>
<comment type="pathway">
    <text evidence="1">Cell wall biogenesis; peptidoglycan biosynthesis.</text>
</comment>
<comment type="subcellular location">
    <subcellularLocation>
        <location evidence="1">Cell inner membrane</location>
        <topology evidence="1">Multi-pass membrane protein</topology>
    </subcellularLocation>
</comment>
<comment type="similarity">
    <text evidence="1">Belongs to the glycosyltransferase 4 family. MraY subfamily.</text>
</comment>
<accession>B0B8Y3</accession>
<keyword id="KW-0131">Cell cycle</keyword>
<keyword id="KW-0132">Cell division</keyword>
<keyword id="KW-0997">Cell inner membrane</keyword>
<keyword id="KW-1003">Cell membrane</keyword>
<keyword id="KW-0133">Cell shape</keyword>
<keyword id="KW-0961">Cell wall biogenesis/degradation</keyword>
<keyword id="KW-0460">Magnesium</keyword>
<keyword id="KW-0472">Membrane</keyword>
<keyword id="KW-0479">Metal-binding</keyword>
<keyword id="KW-0573">Peptidoglycan synthesis</keyword>
<keyword id="KW-0808">Transferase</keyword>
<keyword id="KW-0812">Transmembrane</keyword>
<keyword id="KW-1133">Transmembrane helix</keyword>
<gene>
    <name evidence="1" type="primary">mraY</name>
    <name type="ordered locus">CTL0126</name>
</gene>
<organism>
    <name type="scientific">Chlamydia trachomatis serovar L2 (strain ATCC VR-902B / DSM 19102 / 434/Bu)</name>
    <dbReference type="NCBI Taxonomy" id="471472"/>
    <lineage>
        <taxon>Bacteria</taxon>
        <taxon>Pseudomonadati</taxon>
        <taxon>Chlamydiota</taxon>
        <taxon>Chlamydiia</taxon>
        <taxon>Chlamydiales</taxon>
        <taxon>Chlamydiaceae</taxon>
        <taxon>Chlamydia/Chlamydophila group</taxon>
        <taxon>Chlamydia</taxon>
    </lineage>
</organism>
<evidence type="ECO:0000255" key="1">
    <source>
        <dbReference type="HAMAP-Rule" id="MF_00038"/>
    </source>
</evidence>